<protein>
    <recommendedName>
        <fullName evidence="1">Ribonuclease H</fullName>
        <shortName evidence="1">RNase H</shortName>
        <ecNumber evidence="1">3.1.26.4</ecNumber>
    </recommendedName>
</protein>
<keyword id="KW-0963">Cytoplasm</keyword>
<keyword id="KW-0255">Endonuclease</keyword>
<keyword id="KW-0378">Hydrolase</keyword>
<keyword id="KW-0460">Magnesium</keyword>
<keyword id="KW-0479">Metal-binding</keyword>
<keyword id="KW-0540">Nuclease</keyword>
<evidence type="ECO:0000255" key="1">
    <source>
        <dbReference type="HAMAP-Rule" id="MF_00042"/>
    </source>
</evidence>
<evidence type="ECO:0000255" key="2">
    <source>
        <dbReference type="PROSITE-ProRule" id="PRU00408"/>
    </source>
</evidence>
<proteinExistence type="inferred from homology"/>
<accession>B0KN00</accession>
<gene>
    <name evidence="1" type="primary">rnhA</name>
    <name type="ordered locus">PputGB1_3714</name>
</gene>
<sequence>MSDSVEMFTDGACKGNPGPGGWGVLMIYKGVEKELWGGERETTNNRMELMAAIQGLMSLKRECEVVLTTDSQYVMKGINEWMVNWKKRGWKTAAKEPVKNADLWQQLDEQVNRHKVTWKWVRGHIGHPGNERADQLANRGVDEVRAQR</sequence>
<comment type="function">
    <text evidence="1">Endonuclease that specifically degrades the RNA of RNA-DNA hybrids.</text>
</comment>
<comment type="catalytic activity">
    <reaction evidence="1">
        <text>Endonucleolytic cleavage to 5'-phosphomonoester.</text>
        <dbReference type="EC" id="3.1.26.4"/>
    </reaction>
</comment>
<comment type="cofactor">
    <cofactor evidence="1">
        <name>Mg(2+)</name>
        <dbReference type="ChEBI" id="CHEBI:18420"/>
    </cofactor>
    <text evidence="1">Binds 1 Mg(2+) ion per subunit. May bind a second metal ion at a regulatory site, or after substrate binding.</text>
</comment>
<comment type="subunit">
    <text evidence="1">Monomer.</text>
</comment>
<comment type="subcellular location">
    <subcellularLocation>
        <location evidence="1">Cytoplasm</location>
    </subcellularLocation>
</comment>
<comment type="similarity">
    <text evidence="1">Belongs to the RNase H family.</text>
</comment>
<reference key="1">
    <citation type="submission" date="2008-01" db="EMBL/GenBank/DDBJ databases">
        <title>Complete sequence of Pseudomonas putida GB-1.</title>
        <authorList>
            <consortium name="US DOE Joint Genome Institute"/>
            <person name="Copeland A."/>
            <person name="Lucas S."/>
            <person name="Lapidus A."/>
            <person name="Barry K."/>
            <person name="Glavina del Rio T."/>
            <person name="Dalin E."/>
            <person name="Tice H."/>
            <person name="Pitluck S."/>
            <person name="Bruce D."/>
            <person name="Goodwin L."/>
            <person name="Chertkov O."/>
            <person name="Brettin T."/>
            <person name="Detter J.C."/>
            <person name="Han C."/>
            <person name="Kuske C.R."/>
            <person name="Schmutz J."/>
            <person name="Larimer F."/>
            <person name="Land M."/>
            <person name="Hauser L."/>
            <person name="Kyrpides N."/>
            <person name="Kim E."/>
            <person name="McCarthy J.K."/>
            <person name="Richardson P."/>
        </authorList>
    </citation>
    <scope>NUCLEOTIDE SEQUENCE [LARGE SCALE GENOMIC DNA]</scope>
    <source>
        <strain>GB-1</strain>
    </source>
</reference>
<feature type="chain" id="PRO_1000074658" description="Ribonuclease H">
    <location>
        <begin position="1"/>
        <end position="148"/>
    </location>
</feature>
<feature type="domain" description="RNase H type-1" evidence="2">
    <location>
        <begin position="1"/>
        <end position="142"/>
    </location>
</feature>
<feature type="binding site" evidence="1">
    <location>
        <position position="10"/>
    </location>
    <ligand>
        <name>Mg(2+)</name>
        <dbReference type="ChEBI" id="CHEBI:18420"/>
        <label>1</label>
    </ligand>
</feature>
<feature type="binding site" evidence="1">
    <location>
        <position position="10"/>
    </location>
    <ligand>
        <name>Mg(2+)</name>
        <dbReference type="ChEBI" id="CHEBI:18420"/>
        <label>2</label>
    </ligand>
</feature>
<feature type="binding site" evidence="1">
    <location>
        <position position="48"/>
    </location>
    <ligand>
        <name>Mg(2+)</name>
        <dbReference type="ChEBI" id="CHEBI:18420"/>
        <label>1</label>
    </ligand>
</feature>
<feature type="binding site" evidence="1">
    <location>
        <position position="70"/>
    </location>
    <ligand>
        <name>Mg(2+)</name>
        <dbReference type="ChEBI" id="CHEBI:18420"/>
        <label>1</label>
    </ligand>
</feature>
<feature type="binding site" evidence="1">
    <location>
        <position position="134"/>
    </location>
    <ligand>
        <name>Mg(2+)</name>
        <dbReference type="ChEBI" id="CHEBI:18420"/>
        <label>2</label>
    </ligand>
</feature>
<organism>
    <name type="scientific">Pseudomonas putida (strain GB-1)</name>
    <dbReference type="NCBI Taxonomy" id="76869"/>
    <lineage>
        <taxon>Bacteria</taxon>
        <taxon>Pseudomonadati</taxon>
        <taxon>Pseudomonadota</taxon>
        <taxon>Gammaproteobacteria</taxon>
        <taxon>Pseudomonadales</taxon>
        <taxon>Pseudomonadaceae</taxon>
        <taxon>Pseudomonas</taxon>
    </lineage>
</organism>
<name>RNH_PSEPG</name>
<dbReference type="EC" id="3.1.26.4" evidence="1"/>
<dbReference type="EMBL" id="CP000926">
    <property type="protein sequence ID" value="ABY99604.1"/>
    <property type="molecule type" value="Genomic_DNA"/>
</dbReference>
<dbReference type="RefSeq" id="WP_003251460.1">
    <property type="nucleotide sequence ID" value="NC_010322.1"/>
</dbReference>
<dbReference type="SMR" id="B0KN00"/>
<dbReference type="GeneID" id="83679168"/>
<dbReference type="KEGG" id="ppg:PputGB1_3714"/>
<dbReference type="eggNOG" id="COG0328">
    <property type="taxonomic scope" value="Bacteria"/>
</dbReference>
<dbReference type="HOGENOM" id="CLU_030894_6_0_6"/>
<dbReference type="Proteomes" id="UP000002157">
    <property type="component" value="Chromosome"/>
</dbReference>
<dbReference type="GO" id="GO:0005737">
    <property type="term" value="C:cytoplasm"/>
    <property type="evidence" value="ECO:0007669"/>
    <property type="project" value="UniProtKB-SubCell"/>
</dbReference>
<dbReference type="GO" id="GO:0000287">
    <property type="term" value="F:magnesium ion binding"/>
    <property type="evidence" value="ECO:0007669"/>
    <property type="project" value="UniProtKB-UniRule"/>
</dbReference>
<dbReference type="GO" id="GO:0003676">
    <property type="term" value="F:nucleic acid binding"/>
    <property type="evidence" value="ECO:0007669"/>
    <property type="project" value="InterPro"/>
</dbReference>
<dbReference type="GO" id="GO:0004523">
    <property type="term" value="F:RNA-DNA hybrid ribonuclease activity"/>
    <property type="evidence" value="ECO:0007669"/>
    <property type="project" value="UniProtKB-UniRule"/>
</dbReference>
<dbReference type="GO" id="GO:0043137">
    <property type="term" value="P:DNA replication, removal of RNA primer"/>
    <property type="evidence" value="ECO:0007669"/>
    <property type="project" value="TreeGrafter"/>
</dbReference>
<dbReference type="CDD" id="cd09278">
    <property type="entry name" value="RNase_HI_prokaryote_like"/>
    <property type="match status" value="1"/>
</dbReference>
<dbReference type="FunFam" id="3.30.420.10:FF:000089">
    <property type="entry name" value="Ribonuclease H"/>
    <property type="match status" value="1"/>
</dbReference>
<dbReference type="Gene3D" id="3.30.420.10">
    <property type="entry name" value="Ribonuclease H-like superfamily/Ribonuclease H"/>
    <property type="match status" value="1"/>
</dbReference>
<dbReference type="HAMAP" id="MF_00042">
    <property type="entry name" value="RNase_H"/>
    <property type="match status" value="1"/>
</dbReference>
<dbReference type="InterPro" id="IPR050092">
    <property type="entry name" value="RNase_H"/>
</dbReference>
<dbReference type="InterPro" id="IPR012337">
    <property type="entry name" value="RNaseH-like_sf"/>
</dbReference>
<dbReference type="InterPro" id="IPR002156">
    <property type="entry name" value="RNaseH_domain"/>
</dbReference>
<dbReference type="InterPro" id="IPR036397">
    <property type="entry name" value="RNaseH_sf"/>
</dbReference>
<dbReference type="InterPro" id="IPR022892">
    <property type="entry name" value="RNaseHI"/>
</dbReference>
<dbReference type="NCBIfam" id="NF001236">
    <property type="entry name" value="PRK00203.1"/>
    <property type="match status" value="1"/>
</dbReference>
<dbReference type="PANTHER" id="PTHR10642">
    <property type="entry name" value="RIBONUCLEASE H1"/>
    <property type="match status" value="1"/>
</dbReference>
<dbReference type="PANTHER" id="PTHR10642:SF26">
    <property type="entry name" value="RIBONUCLEASE H1"/>
    <property type="match status" value="1"/>
</dbReference>
<dbReference type="Pfam" id="PF00075">
    <property type="entry name" value="RNase_H"/>
    <property type="match status" value="1"/>
</dbReference>
<dbReference type="SUPFAM" id="SSF53098">
    <property type="entry name" value="Ribonuclease H-like"/>
    <property type="match status" value="1"/>
</dbReference>
<dbReference type="PROSITE" id="PS50879">
    <property type="entry name" value="RNASE_H_1"/>
    <property type="match status" value="1"/>
</dbReference>